<dbReference type="EMBL" id="CP001016">
    <property type="protein sequence ID" value="ACB94518.1"/>
    <property type="molecule type" value="Genomic_DNA"/>
</dbReference>
<dbReference type="RefSeq" id="WP_012383875.1">
    <property type="nucleotide sequence ID" value="NC_010581.1"/>
</dbReference>
<dbReference type="SMR" id="B2IHJ7"/>
<dbReference type="STRING" id="395963.Bind_0868"/>
<dbReference type="KEGG" id="bid:Bind_0868"/>
<dbReference type="eggNOG" id="COG0782">
    <property type="taxonomic scope" value="Bacteria"/>
</dbReference>
<dbReference type="HOGENOM" id="CLU_101379_2_0_5"/>
<dbReference type="OrthoDB" id="9808774at2"/>
<dbReference type="Proteomes" id="UP000001695">
    <property type="component" value="Chromosome"/>
</dbReference>
<dbReference type="GO" id="GO:0003677">
    <property type="term" value="F:DNA binding"/>
    <property type="evidence" value="ECO:0007669"/>
    <property type="project" value="UniProtKB-UniRule"/>
</dbReference>
<dbReference type="GO" id="GO:0070063">
    <property type="term" value="F:RNA polymerase binding"/>
    <property type="evidence" value="ECO:0007669"/>
    <property type="project" value="InterPro"/>
</dbReference>
<dbReference type="GO" id="GO:0006354">
    <property type="term" value="P:DNA-templated transcription elongation"/>
    <property type="evidence" value="ECO:0007669"/>
    <property type="project" value="TreeGrafter"/>
</dbReference>
<dbReference type="GO" id="GO:0032784">
    <property type="term" value="P:regulation of DNA-templated transcription elongation"/>
    <property type="evidence" value="ECO:0007669"/>
    <property type="project" value="UniProtKB-UniRule"/>
</dbReference>
<dbReference type="FunFam" id="1.10.287.180:FF:000001">
    <property type="entry name" value="Transcription elongation factor GreA"/>
    <property type="match status" value="1"/>
</dbReference>
<dbReference type="FunFam" id="3.10.50.30:FF:000001">
    <property type="entry name" value="Transcription elongation factor GreA"/>
    <property type="match status" value="1"/>
</dbReference>
<dbReference type="Gene3D" id="3.10.50.30">
    <property type="entry name" value="Transcription elongation factor, GreA/GreB, C-terminal domain"/>
    <property type="match status" value="1"/>
</dbReference>
<dbReference type="Gene3D" id="1.10.287.180">
    <property type="entry name" value="Transcription elongation factor, GreA/GreB, N-terminal domain"/>
    <property type="match status" value="1"/>
</dbReference>
<dbReference type="HAMAP" id="MF_00105">
    <property type="entry name" value="GreA_GreB"/>
    <property type="match status" value="1"/>
</dbReference>
<dbReference type="InterPro" id="IPR036953">
    <property type="entry name" value="GreA/GreB_C_sf"/>
</dbReference>
<dbReference type="InterPro" id="IPR018151">
    <property type="entry name" value="TF_GreA/GreB_CS"/>
</dbReference>
<dbReference type="InterPro" id="IPR006359">
    <property type="entry name" value="Tscrpt_elong_fac_GreA"/>
</dbReference>
<dbReference type="InterPro" id="IPR028624">
    <property type="entry name" value="Tscrpt_elong_fac_GreA/B"/>
</dbReference>
<dbReference type="InterPro" id="IPR001437">
    <property type="entry name" value="Tscrpt_elong_fac_GreA/B_C"/>
</dbReference>
<dbReference type="InterPro" id="IPR023459">
    <property type="entry name" value="Tscrpt_elong_fac_GreA/B_fam"/>
</dbReference>
<dbReference type="InterPro" id="IPR022691">
    <property type="entry name" value="Tscrpt_elong_fac_GreA/B_N"/>
</dbReference>
<dbReference type="InterPro" id="IPR036805">
    <property type="entry name" value="Tscrpt_elong_fac_GreA/B_N_sf"/>
</dbReference>
<dbReference type="NCBIfam" id="TIGR01462">
    <property type="entry name" value="greA"/>
    <property type="match status" value="1"/>
</dbReference>
<dbReference type="NCBIfam" id="NF001261">
    <property type="entry name" value="PRK00226.1-2"/>
    <property type="match status" value="1"/>
</dbReference>
<dbReference type="NCBIfam" id="NF001263">
    <property type="entry name" value="PRK00226.1-4"/>
    <property type="match status" value="1"/>
</dbReference>
<dbReference type="NCBIfam" id="NF001264">
    <property type="entry name" value="PRK00226.1-5"/>
    <property type="match status" value="1"/>
</dbReference>
<dbReference type="PANTHER" id="PTHR30437">
    <property type="entry name" value="TRANSCRIPTION ELONGATION FACTOR GREA"/>
    <property type="match status" value="1"/>
</dbReference>
<dbReference type="PANTHER" id="PTHR30437:SF4">
    <property type="entry name" value="TRANSCRIPTION ELONGATION FACTOR GREA"/>
    <property type="match status" value="1"/>
</dbReference>
<dbReference type="Pfam" id="PF01272">
    <property type="entry name" value="GreA_GreB"/>
    <property type="match status" value="1"/>
</dbReference>
<dbReference type="Pfam" id="PF03449">
    <property type="entry name" value="GreA_GreB_N"/>
    <property type="match status" value="1"/>
</dbReference>
<dbReference type="PIRSF" id="PIRSF006092">
    <property type="entry name" value="GreA_GreB"/>
    <property type="match status" value="1"/>
</dbReference>
<dbReference type="SUPFAM" id="SSF54534">
    <property type="entry name" value="FKBP-like"/>
    <property type="match status" value="1"/>
</dbReference>
<dbReference type="SUPFAM" id="SSF46557">
    <property type="entry name" value="GreA transcript cleavage protein, N-terminal domain"/>
    <property type="match status" value="1"/>
</dbReference>
<dbReference type="PROSITE" id="PS00829">
    <property type="entry name" value="GREAB_1"/>
    <property type="match status" value="1"/>
</dbReference>
<proteinExistence type="inferred from homology"/>
<evidence type="ECO:0000255" key="1">
    <source>
        <dbReference type="HAMAP-Rule" id="MF_00105"/>
    </source>
</evidence>
<evidence type="ECO:0000256" key="2">
    <source>
        <dbReference type="SAM" id="MobiDB-lite"/>
    </source>
</evidence>
<feature type="chain" id="PRO_1000094149" description="Transcription elongation factor GreA">
    <location>
        <begin position="1"/>
        <end position="157"/>
    </location>
</feature>
<feature type="region of interest" description="Disordered" evidence="2">
    <location>
        <begin position="1"/>
        <end position="24"/>
    </location>
</feature>
<feature type="coiled-coil region" evidence="1">
    <location>
        <begin position="53"/>
        <end position="73"/>
    </location>
</feature>
<feature type="compositionally biased region" description="Basic and acidic residues" evidence="2">
    <location>
        <begin position="12"/>
        <end position="24"/>
    </location>
</feature>
<keyword id="KW-0175">Coiled coil</keyword>
<keyword id="KW-0238">DNA-binding</keyword>
<keyword id="KW-1185">Reference proteome</keyword>
<keyword id="KW-0804">Transcription</keyword>
<keyword id="KW-0805">Transcription regulation</keyword>
<protein>
    <recommendedName>
        <fullName evidence="1">Transcription elongation factor GreA</fullName>
    </recommendedName>
    <alternativeName>
        <fullName evidence="1">Transcript cleavage factor GreA</fullName>
    </alternativeName>
</protein>
<sequence length="157" mass="17246">MDKFPMTPEGYHALDEELKRRQQEERPRIIQAIAEARSHGDLSENAEYHAAKEAQSLNEGRIAELEDKLSRAEIIDVSKLSGNTVMFGATVTLVDEDTEEEKIYQIVGESEADVKAGRVSITSPTARALIGKKIGDSVEVNTPGGGKSYEILNVAFQ</sequence>
<gene>
    <name evidence="1" type="primary">greA</name>
    <name type="ordered locus">Bind_0868</name>
</gene>
<organism>
    <name type="scientific">Beijerinckia indica subsp. indica (strain ATCC 9039 / DSM 1715 / NCIMB 8712)</name>
    <dbReference type="NCBI Taxonomy" id="395963"/>
    <lineage>
        <taxon>Bacteria</taxon>
        <taxon>Pseudomonadati</taxon>
        <taxon>Pseudomonadota</taxon>
        <taxon>Alphaproteobacteria</taxon>
        <taxon>Hyphomicrobiales</taxon>
        <taxon>Beijerinckiaceae</taxon>
        <taxon>Beijerinckia</taxon>
    </lineage>
</organism>
<comment type="function">
    <text evidence="1">Necessary for efficient RNA polymerase transcription elongation past template-encoded arresting sites. The arresting sites in DNA have the property of trapping a certain fraction of elongating RNA polymerases that pass through, resulting in locked ternary complexes. Cleavage of the nascent transcript by cleavage factors such as GreA or GreB allows the resumption of elongation from the new 3'terminus. GreA releases sequences of 2 to 3 nucleotides.</text>
</comment>
<comment type="similarity">
    <text evidence="1">Belongs to the GreA/GreB family.</text>
</comment>
<name>GREA_BEII9</name>
<accession>B2IHJ7</accession>
<reference key="1">
    <citation type="journal article" date="2010" name="J. Bacteriol.">
        <title>Complete genome sequence of Beijerinckia indica subsp. indica.</title>
        <authorList>
            <person name="Tamas I."/>
            <person name="Dedysh S.N."/>
            <person name="Liesack W."/>
            <person name="Stott M.B."/>
            <person name="Alam M."/>
            <person name="Murrell J.C."/>
            <person name="Dunfield P.F."/>
        </authorList>
    </citation>
    <scope>NUCLEOTIDE SEQUENCE [LARGE SCALE GENOMIC DNA]</scope>
    <source>
        <strain>ATCC 9039 / DSM 1715 / NCIMB 8712</strain>
    </source>
</reference>